<feature type="peptide" id="PRO_0000440911" description="Caerulein precursor fragment R1" evidence="2">
    <location>
        <begin position="1"/>
        <end position="27"/>
    </location>
</feature>
<protein>
    <recommendedName>
        <fullName evidence="3">Caerulein precursor fragment R1</fullName>
    </recommendedName>
    <alternativeName>
        <fullName evidence="3">CPF-R1</fullName>
    </alternativeName>
</protein>
<sequence length="27" mass="2614">GFGSFLGKALKAGLKLGANLLGGAPQQ</sequence>
<evidence type="ECO:0000250" key="1">
    <source>
        <dbReference type="UniProtKB" id="C0HK89"/>
    </source>
</evidence>
<evidence type="ECO:0000269" key="2">
    <source>
    </source>
</evidence>
<evidence type="ECO:0000303" key="3">
    <source>
    </source>
</evidence>
<evidence type="ECO:0000305" key="4"/>
<evidence type="ECO:0000305" key="5">
    <source>
    </source>
</evidence>
<reference evidence="4" key="1">
    <citation type="journal article" date="2016" name="Comp. Biochem. Physiol.">
        <title>Peptidomic analysis of the extensive array of host-defense peptides in skin secretions of the dodecaploid frog Xenopus ruwenzoriensis (Pipidae).</title>
        <authorList>
            <person name="Coquet L."/>
            <person name="Kolodziejek J."/>
            <person name="Jouenne T."/>
            <person name="Nowotny N."/>
            <person name="King J.D."/>
            <person name="Conlon J.M."/>
        </authorList>
    </citation>
    <scope>PROTEIN SEQUENCE</scope>
    <scope>SUBCELLULAR LOCATION</scope>
    <scope>MASS SPECTROMETRY</scope>
    <source>
        <tissue evidence="3">Skin secretion</tissue>
    </source>
</reference>
<accession>C0HKM5</accession>
<proteinExistence type="evidence at protein level"/>
<organism evidence="3">
    <name type="scientific">Xenopus ruwenzoriensis</name>
    <name type="common">Uganda clawed frog</name>
    <dbReference type="NCBI Taxonomy" id="105430"/>
    <lineage>
        <taxon>Eukaryota</taxon>
        <taxon>Metazoa</taxon>
        <taxon>Chordata</taxon>
        <taxon>Craniata</taxon>
        <taxon>Vertebrata</taxon>
        <taxon>Euteleostomi</taxon>
        <taxon>Amphibia</taxon>
        <taxon>Batrachia</taxon>
        <taxon>Anura</taxon>
        <taxon>Pipoidea</taxon>
        <taxon>Pipidae</taxon>
        <taxon>Xenopodinae</taxon>
        <taxon>Xenopus</taxon>
        <taxon>Xenopus</taxon>
    </lineage>
</organism>
<keyword id="KW-0878">Amphibian defense peptide</keyword>
<keyword id="KW-0929">Antimicrobial</keyword>
<keyword id="KW-0903">Direct protein sequencing</keyword>
<keyword id="KW-0964">Secreted</keyword>
<name>CPFR1_XENRU</name>
<comment type="function">
    <text evidence="1">Antimicrobial peptide.</text>
</comment>
<comment type="subcellular location">
    <subcellularLocation>
        <location evidence="2">Secreted</location>
    </subcellularLocation>
</comment>
<comment type="tissue specificity">
    <text evidence="5">Expressed by the skin glands.</text>
</comment>
<comment type="mass spectrometry" mass="2613.5" method="MALDI" evidence="2"/>
<comment type="similarity">
    <text evidence="4">Belongs to the gastrin/cholecystokinin family.</text>
</comment>
<dbReference type="GO" id="GO:0005576">
    <property type="term" value="C:extracellular region"/>
    <property type="evidence" value="ECO:0007669"/>
    <property type="project" value="UniProtKB-SubCell"/>
</dbReference>
<dbReference type="GO" id="GO:0006952">
    <property type="term" value="P:defense response"/>
    <property type="evidence" value="ECO:0007669"/>
    <property type="project" value="UniProtKB-KW"/>
</dbReference>